<sequence>MIRLQTPIIKETIHPKKTPTALNWLYPEKIIHNISSKALIDNIYSENYQHILVGLISLIEPWVYLHTNLKLIDNGHLPLIDDETIILISSGEYMIDYYYRIEVNKYGKQTDLFDKLLQSVNNSNKDFFDKYKNYFKISGIDFDLNINTSNTNRFEIIEKYVIESLVEILDKITDGLDAIYNYDNQRDVLLPIFNNNYNNDNVESIDIDYDLDLLKKVKTIMANPTFKFDKDLMFHPTKSLIMEARETNYRVFNDLGNQIDAIMKNSNNIMIFPYAYFLIKNVHGKNDYPNSSYKKFDNIIINQLNQYFIELSNGEIYSNYHKNAFFVDSINGFRSINHDLYLKRFNDFVPEENNNNAFYDTIKFPNITQVNNMEIIPSDSFYIYNQGKEVIDSIVEKKHNIVVNQSKAKATRSNTYIIDKDTIELNLSVVFKGLLFNNKPVVYPISSNIVTFEIERINSTNYVDNVNVPYQVLQIKNPKVTIKTYDRKTLINKLMKKLFDEDHFLPWYIPNYNQNIVKLLFLINLDKHEYIDFLKKLLQTQNKKELVDYSLYYCFDYQSYSFYNLIWIDPMTVDRYYEIQYLIKFIIIMDNILLLPDVSLRKILIDFNSSYGWYDPNVDLSSVKVSYQNFKNNLLNTLNELDDIYHNKSK</sequence>
<keyword id="KW-1185">Reference proteome</keyword>
<keyword id="KW-0946">Virion</keyword>
<name>YL516_MIMIV</name>
<evidence type="ECO:0000269" key="1">
    <source>
    </source>
</evidence>
<evidence type="ECO:0000305" key="2"/>
<protein>
    <recommendedName>
        <fullName>Uncharacterized protein L516</fullName>
    </recommendedName>
</protein>
<feature type="chain" id="PRO_0000244534" description="Uncharacterized protein L516">
    <location>
        <begin position="1"/>
        <end position="650"/>
    </location>
</feature>
<accession>Q5UQ79</accession>
<dbReference type="EMBL" id="AY653733">
    <property type="protein sequence ID" value="AAV50780.1"/>
    <property type="molecule type" value="Genomic_DNA"/>
</dbReference>
<dbReference type="KEGG" id="vg:9925148"/>
<dbReference type="OrthoDB" id="6964at10239"/>
<dbReference type="Proteomes" id="UP000001134">
    <property type="component" value="Genome"/>
</dbReference>
<dbReference type="GO" id="GO:0044423">
    <property type="term" value="C:virion component"/>
    <property type="evidence" value="ECO:0007669"/>
    <property type="project" value="UniProtKB-KW"/>
</dbReference>
<dbReference type="InterPro" id="IPR043881">
    <property type="entry name" value="DUF5851"/>
</dbReference>
<dbReference type="Pfam" id="PF19169">
    <property type="entry name" value="DUF5851"/>
    <property type="match status" value="1"/>
</dbReference>
<gene>
    <name type="ordered locus">MIMI_L516</name>
</gene>
<proteinExistence type="evidence at protein level"/>
<organismHost>
    <name type="scientific">Acanthamoeba polyphaga</name>
    <name type="common">Amoeba</name>
    <dbReference type="NCBI Taxonomy" id="5757"/>
</organismHost>
<comment type="subcellular location">
    <subcellularLocation>
        <location evidence="1">Virion</location>
    </subcellularLocation>
</comment>
<comment type="similarity">
    <text evidence="2">Belongs to the mimivirus L515/L516 family.</text>
</comment>
<reference key="1">
    <citation type="journal article" date="2004" name="Science">
        <title>The 1.2-megabase genome sequence of Mimivirus.</title>
        <authorList>
            <person name="Raoult D."/>
            <person name="Audic S."/>
            <person name="Robert C."/>
            <person name="Abergel C."/>
            <person name="Renesto P."/>
            <person name="Ogata H."/>
            <person name="La Scola B."/>
            <person name="Susan M."/>
            <person name="Claverie J.-M."/>
        </authorList>
    </citation>
    <scope>NUCLEOTIDE SEQUENCE [LARGE SCALE GENOMIC DNA]</scope>
    <source>
        <strain>Rowbotham-Bradford</strain>
    </source>
</reference>
<reference key="2">
    <citation type="journal article" date="2006" name="J. Virol.">
        <title>Mimivirus giant particles incorporate a large fraction of anonymous and unique gene products.</title>
        <authorList>
            <person name="Renesto P."/>
            <person name="Abergel C."/>
            <person name="Decloquement P."/>
            <person name="Moinier D."/>
            <person name="Azza S."/>
            <person name="Ogata H."/>
            <person name="Fourquet P."/>
            <person name="Gorvel J.-P."/>
            <person name="Claverie J.-M."/>
            <person name="Raoult D."/>
        </authorList>
    </citation>
    <scope>IDENTIFICATION BY MASS SPECTROMETRY [LARGE SCALE ANALYSIS]</scope>
    <scope>SUBCELLULAR LOCATION</scope>
</reference>
<organism>
    <name type="scientific">Acanthamoeba polyphaga mimivirus</name>
    <name type="common">APMV</name>
    <dbReference type="NCBI Taxonomy" id="212035"/>
    <lineage>
        <taxon>Viruses</taxon>
        <taxon>Varidnaviria</taxon>
        <taxon>Bamfordvirae</taxon>
        <taxon>Nucleocytoviricota</taxon>
        <taxon>Megaviricetes</taxon>
        <taxon>Imitervirales</taxon>
        <taxon>Mimiviridae</taxon>
        <taxon>Megamimivirinae</taxon>
        <taxon>Mimivirus</taxon>
        <taxon>Mimivirus bradfordmassiliense</taxon>
    </lineage>
</organism>